<accession>Q66A25</accession>
<evidence type="ECO:0000255" key="1">
    <source>
        <dbReference type="HAMAP-Rule" id="MF_00843"/>
    </source>
</evidence>
<gene>
    <name evidence="1" type="primary">lpp</name>
    <name type="ordered locus">YPTB2307</name>
</gene>
<reference key="1">
    <citation type="journal article" date="2004" name="Proc. Natl. Acad. Sci. U.S.A.">
        <title>Insights into the evolution of Yersinia pestis through whole-genome comparison with Yersinia pseudotuberculosis.</title>
        <authorList>
            <person name="Chain P.S.G."/>
            <person name="Carniel E."/>
            <person name="Larimer F.W."/>
            <person name="Lamerdin J."/>
            <person name="Stoutland P.O."/>
            <person name="Regala W.M."/>
            <person name="Georgescu A.M."/>
            <person name="Vergez L.M."/>
            <person name="Land M.L."/>
            <person name="Motin V.L."/>
            <person name="Brubaker R.R."/>
            <person name="Fowler J."/>
            <person name="Hinnebusch J."/>
            <person name="Marceau M."/>
            <person name="Medigue C."/>
            <person name="Simonet M."/>
            <person name="Chenal-Francisque V."/>
            <person name="Souza B."/>
            <person name="Dacheux D."/>
            <person name="Elliott J.M."/>
            <person name="Derbise A."/>
            <person name="Hauser L.J."/>
            <person name="Garcia E."/>
        </authorList>
    </citation>
    <scope>NUCLEOTIDE SEQUENCE [LARGE SCALE GENOMIC DNA]</scope>
    <source>
        <strain>IP32953</strain>
    </source>
</reference>
<sequence length="78" mass="8317">MNRTKLVLGAVILASTMLAGCSSNAKIDQLSSDVQTLNAKVDQLSNDVNAVRADVQAAKDDAARANQRLDNQAQAYKK</sequence>
<keyword id="KW-0998">Cell outer membrane</keyword>
<keyword id="KW-0134">Cell wall</keyword>
<keyword id="KW-0175">Coiled coil</keyword>
<keyword id="KW-0449">Lipoprotein</keyword>
<keyword id="KW-0472">Membrane</keyword>
<keyword id="KW-0564">Palmitate</keyword>
<keyword id="KW-0572">Peptidoglycan-anchor</keyword>
<keyword id="KW-0677">Repeat</keyword>
<keyword id="KW-0964">Secreted</keyword>
<keyword id="KW-0732">Signal</keyword>
<dbReference type="EMBL" id="BX936398">
    <property type="protein sequence ID" value="CAH21545.1"/>
    <property type="molecule type" value="Genomic_DNA"/>
</dbReference>
<dbReference type="RefSeq" id="WP_002227902.1">
    <property type="nucleotide sequence ID" value="NZ_CP009712.1"/>
</dbReference>
<dbReference type="SMR" id="Q66A25"/>
<dbReference type="KEGG" id="ypo:BZ17_147"/>
<dbReference type="KEGG" id="yps:YPTB2307"/>
<dbReference type="PATRIC" id="fig|273123.14.peg.157"/>
<dbReference type="Proteomes" id="UP000001011">
    <property type="component" value="Chromosome"/>
</dbReference>
<dbReference type="GO" id="GO:0009279">
    <property type="term" value="C:cell outer membrane"/>
    <property type="evidence" value="ECO:0007669"/>
    <property type="project" value="UniProtKB-SubCell"/>
</dbReference>
<dbReference type="GO" id="GO:0005576">
    <property type="term" value="C:extracellular region"/>
    <property type="evidence" value="ECO:0007669"/>
    <property type="project" value="UniProtKB-KW"/>
</dbReference>
<dbReference type="GO" id="GO:0008289">
    <property type="term" value="F:lipid binding"/>
    <property type="evidence" value="ECO:0007669"/>
    <property type="project" value="UniProtKB-UniRule"/>
</dbReference>
<dbReference type="GO" id="GO:0042834">
    <property type="term" value="F:peptidoglycan binding"/>
    <property type="evidence" value="ECO:0007669"/>
    <property type="project" value="UniProtKB-UniRule"/>
</dbReference>
<dbReference type="GO" id="GO:0030258">
    <property type="term" value="P:lipid modification"/>
    <property type="evidence" value="ECO:0007669"/>
    <property type="project" value="UniProtKB-UniRule"/>
</dbReference>
<dbReference type="GO" id="GO:0043580">
    <property type="term" value="P:periplasmic space organization"/>
    <property type="evidence" value="ECO:0007669"/>
    <property type="project" value="UniProtKB-UniRule"/>
</dbReference>
<dbReference type="FunFam" id="1.20.5.190:FF:000002">
    <property type="entry name" value="Major outer membrane lipoprotein"/>
    <property type="match status" value="1"/>
</dbReference>
<dbReference type="Gene3D" id="1.20.5.190">
    <property type="match status" value="1"/>
</dbReference>
<dbReference type="HAMAP" id="MF_00843">
    <property type="entry name" value="Lpp"/>
    <property type="match status" value="1"/>
</dbReference>
<dbReference type="InterPro" id="IPR006817">
    <property type="entry name" value="Lipoprotein_leucine-zipper_dom"/>
</dbReference>
<dbReference type="InterPro" id="IPR016367">
    <property type="entry name" value="MOM_Lpp"/>
</dbReference>
<dbReference type="NCBIfam" id="NF040598">
    <property type="entry name" value="Ala_zip_lipo"/>
    <property type="match status" value="1"/>
</dbReference>
<dbReference type="NCBIfam" id="NF011925">
    <property type="entry name" value="PRK15396.1"/>
    <property type="match status" value="1"/>
</dbReference>
<dbReference type="PANTHER" id="PTHR38763:SF1">
    <property type="entry name" value="MAJOR OUTER MEMBRANE LIPOPROTEIN LPP"/>
    <property type="match status" value="1"/>
</dbReference>
<dbReference type="PANTHER" id="PTHR38763">
    <property type="entry name" value="MAJOR OUTER MEMBRANE PROLIPOPROTEIN LPP"/>
    <property type="match status" value="1"/>
</dbReference>
<dbReference type="Pfam" id="PF04728">
    <property type="entry name" value="LPP"/>
    <property type="match status" value="1"/>
</dbReference>
<dbReference type="PIRSF" id="PIRSF002855">
    <property type="entry name" value="Murein-lipoprotein"/>
    <property type="match status" value="1"/>
</dbReference>
<dbReference type="SUPFAM" id="SSF58042">
    <property type="entry name" value="Outer membrane lipoprotein"/>
    <property type="match status" value="1"/>
</dbReference>
<dbReference type="PROSITE" id="PS51257">
    <property type="entry name" value="PROKAR_LIPOPROTEIN"/>
    <property type="match status" value="1"/>
</dbReference>
<organism>
    <name type="scientific">Yersinia pseudotuberculosis serotype I (strain IP32953)</name>
    <dbReference type="NCBI Taxonomy" id="273123"/>
    <lineage>
        <taxon>Bacteria</taxon>
        <taxon>Pseudomonadati</taxon>
        <taxon>Pseudomonadota</taxon>
        <taxon>Gammaproteobacteria</taxon>
        <taxon>Enterobacterales</taxon>
        <taxon>Yersiniaceae</taxon>
        <taxon>Yersinia</taxon>
    </lineage>
</organism>
<proteinExistence type="inferred from homology"/>
<name>LPP_YERPS</name>
<comment type="function">
    <text evidence="1">A highly abundant outer membrane lipoprotein that controls the distance between the inner and outer membranes. The only protein known to be covalently linked to the peptidoglycan network (PGN). Also non-covalently binds the PGN. The link between the cell outer membrane and PGN contributes to maintenance of the structural and functional integrity of the cell envelope, and maintains the correct distance between the PGN and the outer membrane.</text>
</comment>
<comment type="subunit">
    <text evidence="1">Homotrimer.</text>
</comment>
<comment type="subcellular location">
    <subcellularLocation>
        <location evidence="1">Cell outer membrane</location>
        <topology evidence="1">Lipid-anchor</topology>
        <orientation evidence="1">Periplasmic side</orientation>
    </subcellularLocation>
    <subcellularLocation>
        <location evidence="1">Secreted</location>
        <location evidence="1">Cell wall</location>
        <topology evidence="1">Peptidoglycan-anchor</topology>
    </subcellularLocation>
    <text evidence="1">Attached via its lipidated N-terminus to the inner leaflet of the outer membrane. Attached to the peptidoglycan network (PGN) via its C-terminus.</text>
</comment>
<comment type="similarity">
    <text evidence="1">Belongs to the Lpp family.</text>
</comment>
<protein>
    <recommendedName>
        <fullName evidence="1">Major outer membrane lipoprotein Lpp</fullName>
    </recommendedName>
    <alternativeName>
        <fullName evidence="1">Braun lipoprotein</fullName>
        <shortName evidence="1">BLP</shortName>
    </alternativeName>
</protein>
<feature type="signal peptide" evidence="1">
    <location>
        <begin position="1"/>
        <end position="20"/>
    </location>
</feature>
<feature type="chain" id="PRO_0000018349" description="Major outer membrane lipoprotein Lpp" evidence="1">
    <location>
        <begin position="21"/>
        <end position="78"/>
    </location>
</feature>
<feature type="repeat" evidence="1">
    <location>
        <begin position="24"/>
        <end position="34"/>
    </location>
</feature>
<feature type="repeat" evidence="1">
    <location>
        <begin position="38"/>
        <end position="48"/>
    </location>
</feature>
<feature type="coiled-coil region" evidence="1">
    <location>
        <begin position="27"/>
        <end position="75"/>
    </location>
</feature>
<feature type="modified residue" description="N6-murein peptidoglycan lysine" evidence="1">
    <location>
        <position position="78"/>
    </location>
</feature>
<feature type="lipid moiety-binding region" description="N-palmitoyl cysteine" evidence="1">
    <location>
        <position position="21"/>
    </location>
</feature>
<feature type="lipid moiety-binding region" description="S-diacylglycerol cysteine" evidence="1">
    <location>
        <position position="21"/>
    </location>
</feature>